<keyword id="KW-0687">Ribonucleoprotein</keyword>
<keyword id="KW-0689">Ribosomal protein</keyword>
<keyword id="KW-0694">RNA-binding</keyword>
<keyword id="KW-0699">rRNA-binding</keyword>
<accession>B2SUM0</accession>
<reference key="1">
    <citation type="journal article" date="2008" name="BMC Genomics">
        <title>Genome sequence and rapid evolution of the rice pathogen Xanthomonas oryzae pv. oryzae PXO99A.</title>
        <authorList>
            <person name="Salzberg S.L."/>
            <person name="Sommer D.D."/>
            <person name="Schatz M.C."/>
            <person name="Phillippy A.M."/>
            <person name="Rabinowicz P.D."/>
            <person name="Tsuge S."/>
            <person name="Furutani A."/>
            <person name="Ochiai H."/>
            <person name="Delcher A.L."/>
            <person name="Kelley D."/>
            <person name="Madupu R."/>
            <person name="Puiu D."/>
            <person name="Radune D."/>
            <person name="Shumway M."/>
            <person name="Trapnell C."/>
            <person name="Aparna G."/>
            <person name="Jha G."/>
            <person name="Pandey A."/>
            <person name="Patil P.B."/>
            <person name="Ishihara H."/>
            <person name="Meyer D.F."/>
            <person name="Szurek B."/>
            <person name="Verdier V."/>
            <person name="Koebnik R."/>
            <person name="Dow J.M."/>
            <person name="Ryan R.P."/>
            <person name="Hirata H."/>
            <person name="Tsuyumu S."/>
            <person name="Won Lee S."/>
            <person name="Seo Y.-S."/>
            <person name="Sriariyanum M."/>
            <person name="Ronald P.C."/>
            <person name="Sonti R.V."/>
            <person name="Van Sluys M.-A."/>
            <person name="Leach J.E."/>
            <person name="White F.F."/>
            <person name="Bogdanove A.J."/>
        </authorList>
    </citation>
    <scope>NUCLEOTIDE SEQUENCE [LARGE SCALE GENOMIC DNA]</scope>
    <source>
        <strain>PXO99A</strain>
    </source>
</reference>
<comment type="function">
    <text evidence="1">Binds directly to 23S ribosomal RNA and is necessary for the in vitro assembly process of the 50S ribosomal subunit. It is not involved in the protein synthesizing functions of that subunit.</text>
</comment>
<comment type="similarity">
    <text evidence="1">Belongs to the bacterial ribosomal protein bL20 family.</text>
</comment>
<dbReference type="EMBL" id="CP000967">
    <property type="protein sequence ID" value="ACD59993.1"/>
    <property type="molecule type" value="Genomic_DNA"/>
</dbReference>
<dbReference type="RefSeq" id="WP_012445468.1">
    <property type="nucleotide sequence ID" value="NC_010717.2"/>
</dbReference>
<dbReference type="SMR" id="B2SUM0"/>
<dbReference type="KEGG" id="xop:PXO_01386"/>
<dbReference type="eggNOG" id="COG0292">
    <property type="taxonomic scope" value="Bacteria"/>
</dbReference>
<dbReference type="HOGENOM" id="CLU_123265_0_1_6"/>
<dbReference type="Proteomes" id="UP000001740">
    <property type="component" value="Chromosome"/>
</dbReference>
<dbReference type="GO" id="GO:1990904">
    <property type="term" value="C:ribonucleoprotein complex"/>
    <property type="evidence" value="ECO:0007669"/>
    <property type="project" value="UniProtKB-KW"/>
</dbReference>
<dbReference type="GO" id="GO:0005840">
    <property type="term" value="C:ribosome"/>
    <property type="evidence" value="ECO:0007669"/>
    <property type="project" value="UniProtKB-KW"/>
</dbReference>
<dbReference type="GO" id="GO:0019843">
    <property type="term" value="F:rRNA binding"/>
    <property type="evidence" value="ECO:0007669"/>
    <property type="project" value="UniProtKB-UniRule"/>
</dbReference>
<dbReference type="GO" id="GO:0003735">
    <property type="term" value="F:structural constituent of ribosome"/>
    <property type="evidence" value="ECO:0007669"/>
    <property type="project" value="InterPro"/>
</dbReference>
<dbReference type="GO" id="GO:0000027">
    <property type="term" value="P:ribosomal large subunit assembly"/>
    <property type="evidence" value="ECO:0007669"/>
    <property type="project" value="UniProtKB-UniRule"/>
</dbReference>
<dbReference type="GO" id="GO:0006412">
    <property type="term" value="P:translation"/>
    <property type="evidence" value="ECO:0007669"/>
    <property type="project" value="InterPro"/>
</dbReference>
<dbReference type="CDD" id="cd07026">
    <property type="entry name" value="Ribosomal_L20"/>
    <property type="match status" value="1"/>
</dbReference>
<dbReference type="FunFam" id="1.10.1900.20:FF:000001">
    <property type="entry name" value="50S ribosomal protein L20"/>
    <property type="match status" value="1"/>
</dbReference>
<dbReference type="Gene3D" id="6.10.160.10">
    <property type="match status" value="1"/>
</dbReference>
<dbReference type="Gene3D" id="1.10.1900.20">
    <property type="entry name" value="Ribosomal protein L20"/>
    <property type="match status" value="1"/>
</dbReference>
<dbReference type="HAMAP" id="MF_00382">
    <property type="entry name" value="Ribosomal_bL20"/>
    <property type="match status" value="1"/>
</dbReference>
<dbReference type="InterPro" id="IPR005813">
    <property type="entry name" value="Ribosomal_bL20"/>
</dbReference>
<dbReference type="InterPro" id="IPR049946">
    <property type="entry name" value="RIBOSOMAL_L20_CS"/>
</dbReference>
<dbReference type="InterPro" id="IPR035566">
    <property type="entry name" value="Ribosomal_protein_bL20_C"/>
</dbReference>
<dbReference type="NCBIfam" id="TIGR01032">
    <property type="entry name" value="rplT_bact"/>
    <property type="match status" value="1"/>
</dbReference>
<dbReference type="PANTHER" id="PTHR10986">
    <property type="entry name" value="39S RIBOSOMAL PROTEIN L20"/>
    <property type="match status" value="1"/>
</dbReference>
<dbReference type="Pfam" id="PF00453">
    <property type="entry name" value="Ribosomal_L20"/>
    <property type="match status" value="1"/>
</dbReference>
<dbReference type="PRINTS" id="PR00062">
    <property type="entry name" value="RIBOSOMALL20"/>
</dbReference>
<dbReference type="SUPFAM" id="SSF74731">
    <property type="entry name" value="Ribosomal protein L20"/>
    <property type="match status" value="1"/>
</dbReference>
<dbReference type="PROSITE" id="PS00937">
    <property type="entry name" value="RIBOSOMAL_L20"/>
    <property type="match status" value="1"/>
</dbReference>
<protein>
    <recommendedName>
        <fullName evidence="1">Large ribosomal subunit protein bL20</fullName>
    </recommendedName>
    <alternativeName>
        <fullName evidence="2">50S ribosomal protein L20</fullName>
    </alternativeName>
</protein>
<proteinExistence type="inferred from homology"/>
<sequence>MARVKRGVQARRRHKKILTLAKGYYNARRKVFRVAKQAVIKAQQYAYIGRKQKKRNFRSLWITRINAAARINGLSYSRFMNGLLKAGITLDRKVLADIAVHDAAGFTALAEKAKGALAA</sequence>
<gene>
    <name evidence="1" type="primary">rplT</name>
    <name type="ordered locus">PXO_01386</name>
</gene>
<organism>
    <name type="scientific">Xanthomonas oryzae pv. oryzae (strain PXO99A)</name>
    <dbReference type="NCBI Taxonomy" id="360094"/>
    <lineage>
        <taxon>Bacteria</taxon>
        <taxon>Pseudomonadati</taxon>
        <taxon>Pseudomonadota</taxon>
        <taxon>Gammaproteobacteria</taxon>
        <taxon>Lysobacterales</taxon>
        <taxon>Lysobacteraceae</taxon>
        <taxon>Xanthomonas</taxon>
    </lineage>
</organism>
<feature type="chain" id="PRO_1000122393" description="Large ribosomal subunit protein bL20">
    <location>
        <begin position="1"/>
        <end position="119"/>
    </location>
</feature>
<evidence type="ECO:0000255" key="1">
    <source>
        <dbReference type="HAMAP-Rule" id="MF_00382"/>
    </source>
</evidence>
<evidence type="ECO:0000305" key="2"/>
<name>RL20_XANOP</name>